<name>VE2_HPV17</name>
<feature type="chain" id="PRO_0000133196" description="Regulatory protein E2">
    <location>
        <begin position="1"/>
        <end position="452"/>
    </location>
</feature>
<feature type="region of interest" description="Transactivation domain" evidence="1">
    <location>
        <begin position="1"/>
        <end position="201"/>
    </location>
</feature>
<feature type="region of interest" description="Disordered" evidence="2">
    <location>
        <begin position="198"/>
        <end position="356"/>
    </location>
</feature>
<feature type="region of interest" description="DNA-binding domain" evidence="1">
    <location>
        <begin position="368"/>
        <end position="452"/>
    </location>
</feature>
<feature type="compositionally biased region" description="Low complexity" evidence="2">
    <location>
        <begin position="227"/>
        <end position="239"/>
    </location>
</feature>
<feature type="compositionally biased region" description="Basic residues" evidence="2">
    <location>
        <begin position="256"/>
        <end position="270"/>
    </location>
</feature>
<feature type="compositionally biased region" description="Low complexity" evidence="2">
    <location>
        <begin position="309"/>
        <end position="319"/>
    </location>
</feature>
<feature type="compositionally biased region" description="Basic residues" evidence="2">
    <location>
        <begin position="320"/>
        <end position="330"/>
    </location>
</feature>
<proteinExistence type="inferred from homology"/>
<dbReference type="EMBL" id="X74469">
    <property type="protein sequence ID" value="CAA52515.1"/>
    <property type="molecule type" value="Genomic_DNA"/>
</dbReference>
<dbReference type="PIR" id="S36482">
    <property type="entry name" value="S36482"/>
</dbReference>
<dbReference type="SMR" id="P36785"/>
<dbReference type="Proteomes" id="UP000006932">
    <property type="component" value="Genome"/>
</dbReference>
<dbReference type="GO" id="GO:0042025">
    <property type="term" value="C:host cell nucleus"/>
    <property type="evidence" value="ECO:0007669"/>
    <property type="project" value="UniProtKB-SubCell"/>
</dbReference>
<dbReference type="GO" id="GO:0003677">
    <property type="term" value="F:DNA binding"/>
    <property type="evidence" value="ECO:0007669"/>
    <property type="project" value="UniProtKB-UniRule"/>
</dbReference>
<dbReference type="GO" id="GO:0003700">
    <property type="term" value="F:DNA-binding transcription factor activity"/>
    <property type="evidence" value="ECO:0007669"/>
    <property type="project" value="UniProtKB-UniRule"/>
</dbReference>
<dbReference type="GO" id="GO:0000166">
    <property type="term" value="F:nucleotide binding"/>
    <property type="evidence" value="ECO:0007669"/>
    <property type="project" value="UniProtKB-UniRule"/>
</dbReference>
<dbReference type="GO" id="GO:0006260">
    <property type="term" value="P:DNA replication"/>
    <property type="evidence" value="ECO:0007669"/>
    <property type="project" value="UniProtKB-KW"/>
</dbReference>
<dbReference type="GO" id="GO:0006351">
    <property type="term" value="P:DNA-templated transcription"/>
    <property type="evidence" value="ECO:0007669"/>
    <property type="project" value="UniProtKB-UniRule"/>
</dbReference>
<dbReference type="GO" id="GO:0006275">
    <property type="term" value="P:regulation of DNA replication"/>
    <property type="evidence" value="ECO:0007669"/>
    <property type="project" value="UniProtKB-UniRule"/>
</dbReference>
<dbReference type="GO" id="GO:0039693">
    <property type="term" value="P:viral DNA genome replication"/>
    <property type="evidence" value="ECO:0007669"/>
    <property type="project" value="UniProtKB-UniRule"/>
</dbReference>
<dbReference type="Gene3D" id="3.30.70.330">
    <property type="match status" value="1"/>
</dbReference>
<dbReference type="Gene3D" id="1.10.287.30">
    <property type="entry name" value="E2 (early) protein, N terminal domain, subdomain 1"/>
    <property type="match status" value="1"/>
</dbReference>
<dbReference type="Gene3D" id="2.170.200.10">
    <property type="entry name" value="Papillomavirus E2 early protein domain"/>
    <property type="match status" value="1"/>
</dbReference>
<dbReference type="HAMAP" id="MF_04001">
    <property type="entry name" value="PPV_E2"/>
    <property type="match status" value="1"/>
</dbReference>
<dbReference type="InterPro" id="IPR035975">
    <property type="entry name" value="E2/EBNA1_C_sf"/>
</dbReference>
<dbReference type="InterPro" id="IPR012677">
    <property type="entry name" value="Nucleotide-bd_a/b_plait_sf"/>
</dbReference>
<dbReference type="InterPro" id="IPR000427">
    <property type="entry name" value="Papillomavirus_E2_C"/>
</dbReference>
<dbReference type="InterPro" id="IPR001866">
    <property type="entry name" value="PPV_E2_N"/>
</dbReference>
<dbReference type="InterPro" id="IPR033668">
    <property type="entry name" value="Reg_prot_E2"/>
</dbReference>
<dbReference type="InterPro" id="IPR036050">
    <property type="entry name" value="Regulatory_protein_E2_N"/>
</dbReference>
<dbReference type="InterPro" id="IPR042503">
    <property type="entry name" value="Regulatory_protein_E2_N_1"/>
</dbReference>
<dbReference type="InterPro" id="IPR042504">
    <property type="entry name" value="Regulatory_protein_E2_N_2"/>
</dbReference>
<dbReference type="Pfam" id="PF00511">
    <property type="entry name" value="PPV_E2_C"/>
    <property type="match status" value="1"/>
</dbReference>
<dbReference type="Pfam" id="PF00508">
    <property type="entry name" value="PPV_E2_N"/>
    <property type="match status" value="1"/>
</dbReference>
<dbReference type="SUPFAM" id="SSF51332">
    <property type="entry name" value="E2 regulatory, transactivation domain"/>
    <property type="match status" value="1"/>
</dbReference>
<dbReference type="SUPFAM" id="SSF54957">
    <property type="entry name" value="Viral DNA-binding domain"/>
    <property type="match status" value="1"/>
</dbReference>
<organism>
    <name type="scientific">Human papillomavirus 17</name>
    <dbReference type="NCBI Taxonomy" id="10607"/>
    <lineage>
        <taxon>Viruses</taxon>
        <taxon>Monodnaviria</taxon>
        <taxon>Shotokuvirae</taxon>
        <taxon>Cossaviricota</taxon>
        <taxon>Papovaviricetes</taxon>
        <taxon>Zurhausenvirales</taxon>
        <taxon>Papillomaviridae</taxon>
        <taxon>Firstpapillomavirinae</taxon>
        <taxon>Betapapillomavirus</taxon>
        <taxon>Betapapillomavirus 2</taxon>
    </lineage>
</organism>
<gene>
    <name evidence="1" type="primary">E2</name>
</gene>
<protein>
    <recommendedName>
        <fullName evidence="1">Regulatory protein E2</fullName>
    </recommendedName>
</protein>
<organismHost>
    <name type="scientific">Homo sapiens</name>
    <name type="common">Human</name>
    <dbReference type="NCBI Taxonomy" id="9606"/>
</organismHost>
<sequence length="452" mass="51241">MDNLSERFNVLQENLMDIYESGQEDIETQIKHWQLLRQEQVLFYYARKNGVMRVGYQPVPPLATSEAKAKDAIGMVLLLQSLQKSPYGKEPWTLTQTSLETVRSPPANCFKKGPQNIEVMFDNDPENLMSYTVWSFIYYQNLDDTWNKVEGRVDYHGAYYMEGSLKVYYIQFEVDAARFGKTGRWEVHVNEDTIFAPVTSSSPAAGEGTDASPINAASRSSPARGLSATSVSTRTTQRTSPRRYRRKASSPTATTTRHKRQDIRRSRSTSRGRQAISRGGERRQRRRERSYSRDSSRSPNRGRGGSSGGPTTRSQSRSLSRSRSRSRSRSRGSSAGGGVAPEQVGKSVRSVGRNPGGRLTRLLEEARDPPVILLRGEANKLKCFRYRAKKRYGSLVKYYSTTWSWVGANTNDRIGRSRMLLAFNTYDERELFIQKMKLPPGVDWSLGHLDDL</sequence>
<keyword id="KW-0010">Activator</keyword>
<keyword id="KW-0235">DNA replication</keyword>
<keyword id="KW-0238">DNA-binding</keyword>
<keyword id="KW-0244">Early protein</keyword>
<keyword id="KW-1048">Host nucleus</keyword>
<keyword id="KW-0597">Phosphoprotein</keyword>
<keyword id="KW-0678">Repressor</keyword>
<keyword id="KW-0804">Transcription</keyword>
<keyword id="KW-0805">Transcription regulation</keyword>
<accession>P36785</accession>
<comment type="function">
    <text evidence="1">Plays a role in the initiation of viral DNA replication. A dimer of E2 interacts with a dimer of E1 in order to improve specificity of E1 DNA binding activity. Once the complex recognizes and binds DNA at specific sites, the E2 dimer is removed from DNA. E2 also regulates viral transcription through binding to the E2RE response element (5'-ACCNNNNNNGGT-3') present in multiple copies in the regulatory regions of the viral genome. Activates or represses transcription depending on E2RE's position with regards to proximal promoter elements including the TATA-box. Repression occurs by sterically hindering the assembly of the transcription initiation complex.</text>
</comment>
<comment type="subunit">
    <text evidence="1">Binds DNA as homodimer. Interacts with protein E1; this interaction greatly increases E1 DNA-binding activity. Interacts with protein L1; this interaction enhances E2-dependent replication and transcription activation. Interacts with protein L2; this interaction inhibits E2 transcriptional activity but not DNA replication function E2. Interacts with protein E7; this interaction inhibits E7 oncogenic activity. Interacts with host TAF1; this interaction modulates E2-dependent transcriptional regulation. Interacts with host BRD4; this interaction mediates E2 transcriptional activation function. Additionally, the interaction with host BRD4 on mitotic chromosomes mediates tethering of the viral genome. Interacts with host TOPBP1; this interaction is required for optimal viral DNA replication.</text>
</comment>
<comment type="subcellular location">
    <subcellularLocation>
        <location evidence="1">Host nucleus</location>
    </subcellularLocation>
</comment>
<comment type="PTM">
    <text evidence="1">Phosphorylated.</text>
</comment>
<comment type="similarity">
    <text evidence="1">Belongs to the papillomaviridae E2 protein family.</text>
</comment>
<reference key="1">
    <citation type="journal article" date="1994" name="Curr. Top. Microbiol. Immunol.">
        <title>Primer-directed sequencing of human papillomavirus types.</title>
        <authorList>
            <person name="Delius H."/>
            <person name="Hofmann B."/>
        </authorList>
    </citation>
    <scope>NUCLEOTIDE SEQUENCE [GENOMIC DNA]</scope>
</reference>
<evidence type="ECO:0000255" key="1">
    <source>
        <dbReference type="HAMAP-Rule" id="MF_04001"/>
    </source>
</evidence>
<evidence type="ECO:0000256" key="2">
    <source>
        <dbReference type="SAM" id="MobiDB-lite"/>
    </source>
</evidence>